<keyword id="KW-0030">Aminoacyl-tRNA synthetase</keyword>
<keyword id="KW-0067">ATP-binding</keyword>
<keyword id="KW-0963">Cytoplasm</keyword>
<keyword id="KW-0436">Ligase</keyword>
<keyword id="KW-0460">Magnesium</keyword>
<keyword id="KW-0479">Metal-binding</keyword>
<keyword id="KW-0547">Nucleotide-binding</keyword>
<keyword id="KW-0648">Protein biosynthesis</keyword>
<keyword id="KW-1185">Reference proteome</keyword>
<keyword id="KW-0694">RNA-binding</keyword>
<keyword id="KW-0820">tRNA-binding</keyword>
<accession>Q2YBS1</accession>
<evidence type="ECO:0000255" key="1">
    <source>
        <dbReference type="HAMAP-Rule" id="MF_00283"/>
    </source>
</evidence>
<name>SYFB_NITMU</name>
<proteinExistence type="inferred from homology"/>
<gene>
    <name evidence="1" type="primary">pheT</name>
    <name type="ordered locus">Nmul_A0492</name>
</gene>
<dbReference type="EC" id="6.1.1.20" evidence="1"/>
<dbReference type="EMBL" id="CP000103">
    <property type="protein sequence ID" value="ABB73800.1"/>
    <property type="molecule type" value="Genomic_DNA"/>
</dbReference>
<dbReference type="RefSeq" id="WP_011379854.1">
    <property type="nucleotide sequence ID" value="NC_007614.1"/>
</dbReference>
<dbReference type="SMR" id="Q2YBS1"/>
<dbReference type="STRING" id="323848.Nmul_A0492"/>
<dbReference type="KEGG" id="nmu:Nmul_A0492"/>
<dbReference type="eggNOG" id="COG0072">
    <property type="taxonomic scope" value="Bacteria"/>
</dbReference>
<dbReference type="eggNOG" id="COG0073">
    <property type="taxonomic scope" value="Bacteria"/>
</dbReference>
<dbReference type="HOGENOM" id="CLU_016891_0_0_4"/>
<dbReference type="OrthoDB" id="9805455at2"/>
<dbReference type="Proteomes" id="UP000002718">
    <property type="component" value="Chromosome"/>
</dbReference>
<dbReference type="GO" id="GO:0009328">
    <property type="term" value="C:phenylalanine-tRNA ligase complex"/>
    <property type="evidence" value="ECO:0007669"/>
    <property type="project" value="TreeGrafter"/>
</dbReference>
<dbReference type="GO" id="GO:0005524">
    <property type="term" value="F:ATP binding"/>
    <property type="evidence" value="ECO:0007669"/>
    <property type="project" value="UniProtKB-UniRule"/>
</dbReference>
<dbReference type="GO" id="GO:0000287">
    <property type="term" value="F:magnesium ion binding"/>
    <property type="evidence" value="ECO:0007669"/>
    <property type="project" value="UniProtKB-UniRule"/>
</dbReference>
<dbReference type="GO" id="GO:0004826">
    <property type="term" value="F:phenylalanine-tRNA ligase activity"/>
    <property type="evidence" value="ECO:0007669"/>
    <property type="project" value="UniProtKB-UniRule"/>
</dbReference>
<dbReference type="GO" id="GO:0000049">
    <property type="term" value="F:tRNA binding"/>
    <property type="evidence" value="ECO:0007669"/>
    <property type="project" value="UniProtKB-KW"/>
</dbReference>
<dbReference type="GO" id="GO:0006432">
    <property type="term" value="P:phenylalanyl-tRNA aminoacylation"/>
    <property type="evidence" value="ECO:0007669"/>
    <property type="project" value="UniProtKB-UniRule"/>
</dbReference>
<dbReference type="CDD" id="cd00769">
    <property type="entry name" value="PheRS_beta_core"/>
    <property type="match status" value="1"/>
</dbReference>
<dbReference type="CDD" id="cd02796">
    <property type="entry name" value="tRNA_bind_bactPheRS"/>
    <property type="match status" value="1"/>
</dbReference>
<dbReference type="FunFam" id="2.40.50.140:FF:000045">
    <property type="entry name" value="Phenylalanine--tRNA ligase beta subunit"/>
    <property type="match status" value="1"/>
</dbReference>
<dbReference type="FunFam" id="3.30.70.380:FF:000001">
    <property type="entry name" value="Phenylalanine--tRNA ligase beta subunit"/>
    <property type="match status" value="1"/>
</dbReference>
<dbReference type="FunFam" id="3.30.930.10:FF:000022">
    <property type="entry name" value="Phenylalanine--tRNA ligase beta subunit"/>
    <property type="match status" value="1"/>
</dbReference>
<dbReference type="Gene3D" id="3.30.56.10">
    <property type="match status" value="2"/>
</dbReference>
<dbReference type="Gene3D" id="3.30.930.10">
    <property type="entry name" value="Bira Bifunctional Protein, Domain 2"/>
    <property type="match status" value="1"/>
</dbReference>
<dbReference type="Gene3D" id="3.30.70.380">
    <property type="entry name" value="Ferrodoxin-fold anticodon-binding domain"/>
    <property type="match status" value="1"/>
</dbReference>
<dbReference type="Gene3D" id="2.40.50.140">
    <property type="entry name" value="Nucleic acid-binding proteins"/>
    <property type="match status" value="1"/>
</dbReference>
<dbReference type="Gene3D" id="3.50.40.10">
    <property type="entry name" value="Phenylalanyl-trna Synthetase, Chain B, domain 3"/>
    <property type="match status" value="1"/>
</dbReference>
<dbReference type="HAMAP" id="MF_00283">
    <property type="entry name" value="Phe_tRNA_synth_beta1"/>
    <property type="match status" value="1"/>
</dbReference>
<dbReference type="InterPro" id="IPR045864">
    <property type="entry name" value="aa-tRNA-synth_II/BPL/LPL"/>
</dbReference>
<dbReference type="InterPro" id="IPR005146">
    <property type="entry name" value="B3/B4_tRNA-bd"/>
</dbReference>
<dbReference type="InterPro" id="IPR009061">
    <property type="entry name" value="DNA-bd_dom_put_sf"/>
</dbReference>
<dbReference type="InterPro" id="IPR005121">
    <property type="entry name" value="Fdx_antiC-bd"/>
</dbReference>
<dbReference type="InterPro" id="IPR036690">
    <property type="entry name" value="Fdx_antiC-bd_sf"/>
</dbReference>
<dbReference type="InterPro" id="IPR012340">
    <property type="entry name" value="NA-bd_OB-fold"/>
</dbReference>
<dbReference type="InterPro" id="IPR045060">
    <property type="entry name" value="Phe-tRNA-ligase_IIc_bsu"/>
</dbReference>
<dbReference type="InterPro" id="IPR004532">
    <property type="entry name" value="Phe-tRNA-ligase_IIc_bsu_bact"/>
</dbReference>
<dbReference type="InterPro" id="IPR020825">
    <property type="entry name" value="Phe-tRNA_synthase-like_B3/B4"/>
</dbReference>
<dbReference type="InterPro" id="IPR041616">
    <property type="entry name" value="PheRS_beta_core"/>
</dbReference>
<dbReference type="InterPro" id="IPR002547">
    <property type="entry name" value="tRNA-bd_dom"/>
</dbReference>
<dbReference type="InterPro" id="IPR033714">
    <property type="entry name" value="tRNA_bind_bactPheRS"/>
</dbReference>
<dbReference type="InterPro" id="IPR005147">
    <property type="entry name" value="tRNA_synthase_B5-dom"/>
</dbReference>
<dbReference type="NCBIfam" id="TIGR00472">
    <property type="entry name" value="pheT_bact"/>
    <property type="match status" value="1"/>
</dbReference>
<dbReference type="NCBIfam" id="NF045760">
    <property type="entry name" value="YtpR"/>
    <property type="match status" value="1"/>
</dbReference>
<dbReference type="PANTHER" id="PTHR10947:SF0">
    <property type="entry name" value="PHENYLALANINE--TRNA LIGASE BETA SUBUNIT"/>
    <property type="match status" value="1"/>
</dbReference>
<dbReference type="PANTHER" id="PTHR10947">
    <property type="entry name" value="PHENYLALANYL-TRNA SYNTHETASE BETA CHAIN AND LEUCINE-RICH REPEAT-CONTAINING PROTEIN 47"/>
    <property type="match status" value="1"/>
</dbReference>
<dbReference type="Pfam" id="PF03483">
    <property type="entry name" value="B3_4"/>
    <property type="match status" value="1"/>
</dbReference>
<dbReference type="Pfam" id="PF03484">
    <property type="entry name" value="B5"/>
    <property type="match status" value="1"/>
</dbReference>
<dbReference type="Pfam" id="PF03147">
    <property type="entry name" value="FDX-ACB"/>
    <property type="match status" value="1"/>
</dbReference>
<dbReference type="Pfam" id="PF01588">
    <property type="entry name" value="tRNA_bind"/>
    <property type="match status" value="1"/>
</dbReference>
<dbReference type="Pfam" id="PF17759">
    <property type="entry name" value="tRNA_synthFbeta"/>
    <property type="match status" value="1"/>
</dbReference>
<dbReference type="SMART" id="SM00873">
    <property type="entry name" value="B3_4"/>
    <property type="match status" value="1"/>
</dbReference>
<dbReference type="SMART" id="SM00874">
    <property type="entry name" value="B5"/>
    <property type="match status" value="1"/>
</dbReference>
<dbReference type="SMART" id="SM00896">
    <property type="entry name" value="FDX-ACB"/>
    <property type="match status" value="1"/>
</dbReference>
<dbReference type="SUPFAM" id="SSF54991">
    <property type="entry name" value="Anticodon-binding domain of PheRS"/>
    <property type="match status" value="1"/>
</dbReference>
<dbReference type="SUPFAM" id="SSF55681">
    <property type="entry name" value="Class II aaRS and biotin synthetases"/>
    <property type="match status" value="1"/>
</dbReference>
<dbReference type="SUPFAM" id="SSF50249">
    <property type="entry name" value="Nucleic acid-binding proteins"/>
    <property type="match status" value="1"/>
</dbReference>
<dbReference type="SUPFAM" id="SSF56037">
    <property type="entry name" value="PheT/TilS domain"/>
    <property type="match status" value="1"/>
</dbReference>
<dbReference type="SUPFAM" id="SSF46955">
    <property type="entry name" value="Putative DNA-binding domain"/>
    <property type="match status" value="1"/>
</dbReference>
<dbReference type="PROSITE" id="PS51483">
    <property type="entry name" value="B5"/>
    <property type="match status" value="1"/>
</dbReference>
<dbReference type="PROSITE" id="PS51447">
    <property type="entry name" value="FDX_ACB"/>
    <property type="match status" value="1"/>
</dbReference>
<dbReference type="PROSITE" id="PS50886">
    <property type="entry name" value="TRBD"/>
    <property type="match status" value="1"/>
</dbReference>
<organism>
    <name type="scientific">Nitrosospira multiformis (strain ATCC 25196 / NCIMB 11849 / C 71)</name>
    <dbReference type="NCBI Taxonomy" id="323848"/>
    <lineage>
        <taxon>Bacteria</taxon>
        <taxon>Pseudomonadati</taxon>
        <taxon>Pseudomonadota</taxon>
        <taxon>Betaproteobacteria</taxon>
        <taxon>Nitrosomonadales</taxon>
        <taxon>Nitrosomonadaceae</taxon>
        <taxon>Nitrosospira</taxon>
    </lineage>
</organism>
<comment type="catalytic activity">
    <reaction evidence="1">
        <text>tRNA(Phe) + L-phenylalanine + ATP = L-phenylalanyl-tRNA(Phe) + AMP + diphosphate + H(+)</text>
        <dbReference type="Rhea" id="RHEA:19413"/>
        <dbReference type="Rhea" id="RHEA-COMP:9668"/>
        <dbReference type="Rhea" id="RHEA-COMP:9699"/>
        <dbReference type="ChEBI" id="CHEBI:15378"/>
        <dbReference type="ChEBI" id="CHEBI:30616"/>
        <dbReference type="ChEBI" id="CHEBI:33019"/>
        <dbReference type="ChEBI" id="CHEBI:58095"/>
        <dbReference type="ChEBI" id="CHEBI:78442"/>
        <dbReference type="ChEBI" id="CHEBI:78531"/>
        <dbReference type="ChEBI" id="CHEBI:456215"/>
        <dbReference type="EC" id="6.1.1.20"/>
    </reaction>
</comment>
<comment type="cofactor">
    <cofactor evidence="1">
        <name>Mg(2+)</name>
        <dbReference type="ChEBI" id="CHEBI:18420"/>
    </cofactor>
    <text evidence="1">Binds 2 magnesium ions per tetramer.</text>
</comment>
<comment type="subunit">
    <text evidence="1">Tetramer of two alpha and two beta subunits.</text>
</comment>
<comment type="subcellular location">
    <subcellularLocation>
        <location evidence="1">Cytoplasm</location>
    </subcellularLocation>
</comment>
<comment type="similarity">
    <text evidence="1">Belongs to the phenylalanyl-tRNA synthetase beta subunit family. Type 1 subfamily.</text>
</comment>
<feature type="chain" id="PRO_0000232070" description="Phenylalanine--tRNA ligase beta subunit">
    <location>
        <begin position="1"/>
        <end position="792"/>
    </location>
</feature>
<feature type="domain" description="tRNA-binding" evidence="1">
    <location>
        <begin position="39"/>
        <end position="150"/>
    </location>
</feature>
<feature type="domain" description="B5" evidence="1">
    <location>
        <begin position="405"/>
        <end position="480"/>
    </location>
</feature>
<feature type="domain" description="FDX-ACB" evidence="1">
    <location>
        <begin position="698"/>
        <end position="791"/>
    </location>
</feature>
<feature type="binding site" evidence="1">
    <location>
        <position position="458"/>
    </location>
    <ligand>
        <name>Mg(2+)</name>
        <dbReference type="ChEBI" id="CHEBI:18420"/>
        <note>shared with alpha subunit</note>
    </ligand>
</feature>
<feature type="binding site" evidence="1">
    <location>
        <position position="464"/>
    </location>
    <ligand>
        <name>Mg(2+)</name>
        <dbReference type="ChEBI" id="CHEBI:18420"/>
        <note>shared with alpha subunit</note>
    </ligand>
</feature>
<feature type="binding site" evidence="1">
    <location>
        <position position="467"/>
    </location>
    <ligand>
        <name>Mg(2+)</name>
        <dbReference type="ChEBI" id="CHEBI:18420"/>
        <note>shared with alpha subunit</note>
    </ligand>
</feature>
<feature type="binding site" evidence="1">
    <location>
        <position position="468"/>
    </location>
    <ligand>
        <name>Mg(2+)</name>
        <dbReference type="ChEBI" id="CHEBI:18420"/>
        <note>shared with alpha subunit</note>
    </ligand>
</feature>
<sequence>MKFSENWLRTFVNPPLSTRDLAHALTMAGLEVESVEPVAPAFHKVVVAEVLSVQKHPDADHLQVCKVKTGAAGNDEPLQIVCGAANVRAGIKVPCALSGAQLPGMAIKQTRIRGVESTGMLCSAKELGLEDASSGLLLLSPDAPVGTDFRAYYDLEDNLLTLKLTPNRGDCLGLSGIAREVAAITSQNRQSVEIKPVSAQIAETLAIHVDAATACPLYCGRVVRGISLDVATPQWMVQRLERSGLRAINPVVDVTNYVMLETGQPLHAFDLARIQGGLAGSIHIRFARPGESIELLNGENLVLQPDMLVIADDAKPLALAGIMGGNESGVTSGAVDLFLESAFFSPGVIAGKSFSLGFSSDSAYRFERGVDFGATRAAMERATDLILNICGGRVGPVTELRGSLPARDPIRLGLERVGRVLGVELDEGRVAELLHRLQFGFLNTDAVFYVTPPTYRFDLAIEEDLIEELARMYGYNRIAATMPRAKLDILSAPETRRTRSRLRQILVARDYQEVINYAFVETSWETELAGNRTPIALKNPLSNQLAVMRSSLLGGLISNLQFNLNRKQSRIRLFEIGGCFQKDGQTYSQQEKLAGLCYGDVVEEQWGLPARPVDFYDAKADIEALLWPGELRVAAARHPALHPGKSAEISIDGRIGGFLGELHPRWQQKLGLARSVVLFELNVDVLLARTLPQASEISKYPPIRRDIAVLVPKDVSVQAILDSMRSEKLSIISEIALFDVYQGKGVESDKKSLAFRMLLQDTEKTLTDAQADQVVAKLISVLENRFGARLRS</sequence>
<protein>
    <recommendedName>
        <fullName evidence="1">Phenylalanine--tRNA ligase beta subunit</fullName>
        <ecNumber evidence="1">6.1.1.20</ecNumber>
    </recommendedName>
    <alternativeName>
        <fullName evidence="1">Phenylalanyl-tRNA synthetase beta subunit</fullName>
        <shortName evidence="1">PheRS</shortName>
    </alternativeName>
</protein>
<reference key="1">
    <citation type="submission" date="2005-08" db="EMBL/GenBank/DDBJ databases">
        <title>Complete sequence of chromosome 1 of Nitrosospira multiformis ATCC 25196.</title>
        <authorList>
            <person name="Copeland A."/>
            <person name="Lucas S."/>
            <person name="Lapidus A."/>
            <person name="Barry K."/>
            <person name="Detter J.C."/>
            <person name="Glavina T."/>
            <person name="Hammon N."/>
            <person name="Israni S."/>
            <person name="Pitluck S."/>
            <person name="Chain P."/>
            <person name="Malfatti S."/>
            <person name="Shin M."/>
            <person name="Vergez L."/>
            <person name="Schmutz J."/>
            <person name="Larimer F."/>
            <person name="Land M."/>
            <person name="Hauser L."/>
            <person name="Kyrpides N."/>
            <person name="Lykidis A."/>
            <person name="Richardson P."/>
        </authorList>
    </citation>
    <scope>NUCLEOTIDE SEQUENCE [LARGE SCALE GENOMIC DNA]</scope>
    <source>
        <strain>ATCC 25196 / NCIMB 11849 / C 71</strain>
    </source>
</reference>